<accession>P0DPG3</accession>
<accession>A0A2U3T1N7</accession>
<name>ATP5E_TRYBB</name>
<sequence>MIRRSCALLSSSWRDHGISYLKYLNVCTETLHSTVKESRRAKYERWSKPCYTAQRPDGAGGQETIDKVPIHTKDY</sequence>
<reference key="1">
    <citation type="journal article" date="2018" name="Proc. Natl. Acad. Sci. U.S.A.">
        <title>ATP synthase from Trypanosoma brucei has an elaborated canonical F1-domain and conventional catalytic sites.</title>
        <authorList>
            <person name="Montgomery M.G."/>
            <person name="Gahura O."/>
            <person name="Leslie A.G.W."/>
            <person name="Zikova A."/>
            <person name="Walker J.E."/>
        </authorList>
    </citation>
    <scope>NUCLEOTIDE SEQUENCE [GENOMIC DNA]</scope>
    <scope>X-RAY CRYSTALLOGRAPHY (3.2 ANGSTROMS) OF 10-75</scope>
    <scope>SUBUNIT</scope>
    <scope>SUBCELLULAR LOCATION</scope>
    <scope>FUNCTION</scope>
    <source>
        <strain>427</strain>
    </source>
</reference>
<reference key="2">
    <citation type="journal article" date="2009" name="PLoS Pathog.">
        <title>The F(0)F(1)-ATP synthase complex contains novel subunits and is essential for procyclic Trypanosoma brucei.</title>
        <authorList>
            <person name="Zikova A."/>
            <person name="Schnaufer A."/>
            <person name="Dalley R.A."/>
            <person name="Panigrahi A.K."/>
            <person name="Stuart K.D."/>
        </authorList>
    </citation>
    <scope>FUNCTION</scope>
    <scope>SUBCELLULAR LOCATION</scope>
    <scope>SUBUNIT</scope>
    <scope>IDENTIFICATION BY MASS SPECTROMETRY</scope>
    <scope>NOMENCLATURE</scope>
    <source>
        <strain>427</strain>
    </source>
</reference>
<reference key="3">
    <citation type="journal article" date="2018" name="FEBS J.">
        <title>The F1-ATPase from Trypanosoma brucei is elaborated by three copies of an additional p18-subunit.</title>
        <authorList>
            <person name="Gahura O."/>
            <person name="Subrtova K."/>
            <person name="Vachova H."/>
            <person name="Panicucci B."/>
            <person name="Fearnley I.M."/>
            <person name="Harbour M.E."/>
            <person name="Walker J.E."/>
            <person name="Zikova A."/>
        </authorList>
    </citation>
    <scope>FUNCTION</scope>
    <scope>PROTEIN SEQUENCE OF 10-15</scope>
    <scope>SUBCELLULAR LOCATION</scope>
    <scope>SUBUNIT</scope>
    <scope>IDENTIFICATION BY MASS SPECTROMETRY</scope>
    <source>
        <strain>427</strain>
    </source>
</reference>
<comment type="function">
    <text evidence="1 2 3 5">Mitochondrial membrane ATP synthase (F(1)F(o) ATP synthase) produces ATP from ADP in the presence of a proton gradient across the membrane which is generated by electron transport complexes of the respiratory chain (PubMed:19436713, PubMed:29247468). F-type ATPases consist of two structural domains, F(1) - containing the extramembraneous catalytic core, and F(o) - containing the membrane proton channel, linked together by a central stalk and a peripheral stalk (PubMed:19436713, PubMed:29247468, PubMed:29440423). During catalysis, ATP synthesis in the catalytic domain of F(1) is coupled via a rotary mechanism of the central stalk subunits to proton translocation. Subunits alpha and beta form the catalytic core in F(1) (PubMed:19436713, PubMed:29440423). Rotation of the central stalk against the surrounding alpha(3)beta(3) subunits leads to hydrolysis of ATP in three separate catalytic sites on the beta subunits (Probable). Contrary to the procyclic, insect form that requires F(1)F(o) ATP synthase for ATP synthesis, the bloodstream form relies on ATP hydrolysis by F(1)F(o) ATP synthase to maintain its mitochondrial membrane potential (PubMed:29247468).</text>
</comment>
<comment type="subunit">
    <text evidence="1 2 3">F-type ATPases have 2 components, F(1) - the catalytic core - and F(o) - the membrane proton channel. F(1) has five subunits: alpha(3), beta(3), gamma(1), delta(1), epsilon(1), plus the additional subunit P18 (Tb427.05.1710) that is not present in F(1)F(o) ATP synthase from metazoa (PubMed:19436713, PubMed:29247468, PubMed:29440423). Subunit P18 (Tb927.5.1710) interacts with the alpha subunit with a 1:1 stoichiometry; the interaction is direct (PubMed:29440423). Subunit gamma is part of the central stalk (PubMed:29440423). F(o) has three main subunits: a, b and c (PubMed:19436713). The trypanosomal ATPase complex contains additional subunits that are not present in the F(1)F(o) ATP synthase from metazoa (PubMed:19436713, PubMed:29247468, PubMed:29440423).</text>
</comment>
<comment type="subcellular location">
    <subcellularLocation>
        <location>Mitochondrion</location>
    </subcellularLocation>
    <subcellularLocation>
        <location evidence="1 2 3">Mitochondrion inner membrane</location>
        <topology evidence="1 2 3">Peripheral membrane protein</topology>
        <orientation evidence="6 7 8">Matrix side</orientation>
    </subcellularLocation>
</comment>
<comment type="similarity">
    <text evidence="5">Belongs to the eukaryotic ATPase epsilon family.</text>
</comment>
<proteinExistence type="evidence at protein level"/>
<protein>
    <recommendedName>
        <fullName>ATP synthase subunit epsilon, mitochondrial</fullName>
    </recommendedName>
    <alternativeName>
        <fullName evidence="4">ATP synthase F1 subunit epsilon</fullName>
    </alternativeName>
</protein>
<organism>
    <name type="scientific">Trypanosoma brucei brucei</name>
    <dbReference type="NCBI Taxonomy" id="5702"/>
    <lineage>
        <taxon>Eukaryota</taxon>
        <taxon>Discoba</taxon>
        <taxon>Euglenozoa</taxon>
        <taxon>Kinetoplastea</taxon>
        <taxon>Metakinetoplastina</taxon>
        <taxon>Trypanosomatida</taxon>
        <taxon>Trypanosomatidae</taxon>
        <taxon>Trypanosoma</taxon>
    </lineage>
</organism>
<evidence type="ECO:0000269" key="1">
    <source>
    </source>
</evidence>
<evidence type="ECO:0000269" key="2">
    <source>
    </source>
</evidence>
<evidence type="ECO:0000269" key="3">
    <source>
    </source>
</evidence>
<evidence type="ECO:0000303" key="4">
    <source>
    </source>
</evidence>
<evidence type="ECO:0000305" key="5"/>
<evidence type="ECO:0000305" key="6">
    <source>
    </source>
</evidence>
<evidence type="ECO:0000305" key="7">
    <source>
    </source>
</evidence>
<evidence type="ECO:0000305" key="8">
    <source>
    </source>
</evidence>
<feature type="transit peptide" description="Mitochondrion" evidence="2">
    <location>
        <begin position="1"/>
        <end position="9"/>
    </location>
</feature>
<feature type="chain" id="PRO_0000444145" description="ATP synthase subunit epsilon, mitochondrial">
    <location>
        <begin position="10"/>
        <end position="75"/>
    </location>
</feature>
<keyword id="KW-0002">3D-structure</keyword>
<keyword id="KW-0066">ATP synthesis</keyword>
<keyword id="KW-0139">CF(1)</keyword>
<keyword id="KW-0903">Direct protein sequencing</keyword>
<keyword id="KW-0375">Hydrogen ion transport</keyword>
<keyword id="KW-0406">Ion transport</keyword>
<keyword id="KW-0472">Membrane</keyword>
<keyword id="KW-0496">Mitochondrion</keyword>
<keyword id="KW-0999">Mitochondrion inner membrane</keyword>
<keyword id="KW-0809">Transit peptide</keyword>
<keyword id="KW-0813">Transport</keyword>
<dbReference type="EMBL" id="LS423647">
    <property type="protein sequence ID" value="SPS16793.1"/>
    <property type="molecule type" value="Genomic_DNA"/>
</dbReference>
<dbReference type="PDB" id="6F5D">
    <property type="method" value="X-ray"/>
    <property type="resolution" value="3.20 A"/>
    <property type="chains" value="I=10-75"/>
</dbReference>
<dbReference type="PDB" id="8AP6">
    <property type="method" value="EM"/>
    <property type="resolution" value="3.20 A"/>
    <property type="chains" value="I1/I2=1-75"/>
</dbReference>
<dbReference type="PDB" id="8AP9">
    <property type="method" value="EM"/>
    <property type="resolution" value="3.70 A"/>
    <property type="chains" value="I=1-75"/>
</dbReference>
<dbReference type="PDB" id="8APA">
    <property type="method" value="EM"/>
    <property type="resolution" value="3.70 A"/>
    <property type="chains" value="I1=1-75"/>
</dbReference>
<dbReference type="PDB" id="8APB">
    <property type="method" value="EM"/>
    <property type="resolution" value="3.80 A"/>
    <property type="chains" value="I1=1-75"/>
</dbReference>
<dbReference type="PDB" id="8APC">
    <property type="method" value="EM"/>
    <property type="resolution" value="3.50 A"/>
    <property type="chains" value="I1=1-75"/>
</dbReference>
<dbReference type="PDB" id="8APD">
    <property type="method" value="EM"/>
    <property type="resolution" value="3.70 A"/>
    <property type="chains" value="I1=1-75"/>
</dbReference>
<dbReference type="PDB" id="8APE">
    <property type="method" value="EM"/>
    <property type="resolution" value="3.70 A"/>
    <property type="chains" value="I1=1-75"/>
</dbReference>
<dbReference type="PDB" id="8APF">
    <property type="method" value="EM"/>
    <property type="resolution" value="4.30 A"/>
    <property type="chains" value="I1=1-75"/>
</dbReference>
<dbReference type="PDB" id="8APG">
    <property type="method" value="EM"/>
    <property type="resolution" value="3.50 A"/>
    <property type="chains" value="I1=1-75"/>
</dbReference>
<dbReference type="PDB" id="8APH">
    <property type="method" value="EM"/>
    <property type="resolution" value="3.80 A"/>
    <property type="chains" value="I1=1-75"/>
</dbReference>
<dbReference type="PDB" id="8APJ">
    <property type="method" value="EM"/>
    <property type="resolution" value="3.80 A"/>
    <property type="chains" value="I1=1-75"/>
</dbReference>
<dbReference type="PDB" id="8APK">
    <property type="method" value="EM"/>
    <property type="resolution" value="3.70 A"/>
    <property type="chains" value="I1=1-75"/>
</dbReference>
<dbReference type="PDBsum" id="6F5D"/>
<dbReference type="PDBsum" id="8AP6"/>
<dbReference type="PDBsum" id="8AP9"/>
<dbReference type="PDBsum" id="8APA"/>
<dbReference type="PDBsum" id="8APB"/>
<dbReference type="PDBsum" id="8APC"/>
<dbReference type="PDBsum" id="8APD"/>
<dbReference type="PDBsum" id="8APE"/>
<dbReference type="PDBsum" id="8APF"/>
<dbReference type="PDBsum" id="8APG"/>
<dbReference type="PDBsum" id="8APH"/>
<dbReference type="PDBsum" id="8APJ"/>
<dbReference type="PDBsum" id="8APK"/>
<dbReference type="EMDB" id="EMD-15559"/>
<dbReference type="EMDB" id="EMD-15562"/>
<dbReference type="EMDB" id="EMD-15563"/>
<dbReference type="EMDB" id="EMD-15564"/>
<dbReference type="EMDB" id="EMD-15565"/>
<dbReference type="EMDB" id="EMD-15566"/>
<dbReference type="EMDB" id="EMD-15567"/>
<dbReference type="EMDB" id="EMD-15568"/>
<dbReference type="EMDB" id="EMD-15570"/>
<dbReference type="EMDB" id="EMD-15571"/>
<dbReference type="EMDB" id="EMD-15572"/>
<dbReference type="EMDB" id="EMD-15573"/>
<dbReference type="SMR" id="P0DPG3"/>
<dbReference type="TCDB" id="3.A.2.1.13">
    <property type="family name" value="the h+- or na+-translocating f-type, v-type and a-type atpase (f-atpase) superfamily"/>
</dbReference>
<dbReference type="OMA" id="MIRRSCA"/>
<dbReference type="GO" id="GO:0005743">
    <property type="term" value="C:mitochondrial inner membrane"/>
    <property type="evidence" value="ECO:0007669"/>
    <property type="project" value="UniProtKB-SubCell"/>
</dbReference>
<dbReference type="GO" id="GO:0045259">
    <property type="term" value="C:proton-transporting ATP synthase complex"/>
    <property type="evidence" value="ECO:0007669"/>
    <property type="project" value="UniProtKB-KW"/>
</dbReference>
<dbReference type="GO" id="GO:0046933">
    <property type="term" value="F:proton-transporting ATP synthase activity, rotational mechanism"/>
    <property type="evidence" value="ECO:0007669"/>
    <property type="project" value="InterPro"/>
</dbReference>
<dbReference type="CDD" id="cd12153">
    <property type="entry name" value="F1-ATPase_epsilon"/>
    <property type="match status" value="1"/>
</dbReference>
<dbReference type="Gene3D" id="1.10.1620.20">
    <property type="entry name" value="ATP synthase, F1 complex, epsilon subunit superfamily, mitochondrial"/>
    <property type="match status" value="1"/>
</dbReference>
<dbReference type="InterPro" id="IPR006721">
    <property type="entry name" value="ATP_synth_F1_esu_mt"/>
</dbReference>
<dbReference type="InterPro" id="IPR036742">
    <property type="entry name" value="ATP_synth_F1_esu_sf_mt"/>
</dbReference>
<dbReference type="Pfam" id="PF04627">
    <property type="entry name" value="ATP-synt_Eps"/>
    <property type="match status" value="1"/>
</dbReference>
<dbReference type="SUPFAM" id="SSF48690">
    <property type="entry name" value="Epsilon subunit of mitochondrial F1F0-ATP synthase"/>
    <property type="match status" value="1"/>
</dbReference>
<gene>
    <name evidence="4" type="ORF">Tb427.10.5050</name>
</gene>